<feature type="chain" id="PRO_0000081957" description="Spliceosome-associated protein 49">
    <location>
        <begin position="1"/>
        <end position="335"/>
    </location>
</feature>
<feature type="domain" description="RRM 1" evidence="1">
    <location>
        <begin position="13"/>
        <end position="84"/>
    </location>
</feature>
<feature type="domain" description="RRM 2" evidence="1">
    <location>
        <begin position="101"/>
        <end position="172"/>
    </location>
</feature>
<feature type="region of interest" description="Disordered" evidence="2">
    <location>
        <begin position="204"/>
        <end position="223"/>
    </location>
</feature>
<dbReference type="EMBL" id="CU329670">
    <property type="protein sequence ID" value="CAC19730.2"/>
    <property type="molecule type" value="Genomic_DNA"/>
</dbReference>
<dbReference type="RefSeq" id="NP_594001.2">
    <property type="nucleotide sequence ID" value="NM_001019427.2"/>
</dbReference>
<dbReference type="SMR" id="O14102"/>
<dbReference type="BioGRID" id="278888">
    <property type="interactions" value="13"/>
</dbReference>
<dbReference type="FunCoup" id="O14102">
    <property type="interactions" value="649"/>
</dbReference>
<dbReference type="IntAct" id="O14102">
    <property type="interactions" value="4"/>
</dbReference>
<dbReference type="STRING" id="284812.O14102"/>
<dbReference type="PaxDb" id="4896-SPAC31G5.01.1"/>
<dbReference type="EnsemblFungi" id="SPAC31G5.01.1">
    <property type="protein sequence ID" value="SPAC31G5.01.1:pep"/>
    <property type="gene ID" value="SPAC31G5.01"/>
</dbReference>
<dbReference type="GeneID" id="2542426"/>
<dbReference type="KEGG" id="spo:2542426"/>
<dbReference type="PomBase" id="SPAC31G5.01">
    <property type="gene designation" value="sap49"/>
</dbReference>
<dbReference type="VEuPathDB" id="FungiDB:SPAC31G5.01"/>
<dbReference type="eggNOG" id="KOG0131">
    <property type="taxonomic scope" value="Eukaryota"/>
</dbReference>
<dbReference type="HOGENOM" id="CLU_012062_21_2_1"/>
<dbReference type="InParanoid" id="O14102"/>
<dbReference type="OMA" id="HNGFGFC"/>
<dbReference type="PhylomeDB" id="O14102"/>
<dbReference type="PRO" id="PR:O14102"/>
<dbReference type="Proteomes" id="UP000002485">
    <property type="component" value="Chromosome I"/>
</dbReference>
<dbReference type="GO" id="GO:0005829">
    <property type="term" value="C:cytosol"/>
    <property type="evidence" value="ECO:0007005"/>
    <property type="project" value="PomBase"/>
</dbReference>
<dbReference type="GO" id="GO:0005634">
    <property type="term" value="C:nucleus"/>
    <property type="evidence" value="ECO:0007005"/>
    <property type="project" value="PomBase"/>
</dbReference>
<dbReference type="GO" id="GO:0071011">
    <property type="term" value="C:precatalytic spliceosome"/>
    <property type="evidence" value="ECO:0000318"/>
    <property type="project" value="GO_Central"/>
</dbReference>
<dbReference type="GO" id="GO:0005686">
    <property type="term" value="C:U2 snRNP"/>
    <property type="evidence" value="ECO:0000314"/>
    <property type="project" value="PomBase"/>
</dbReference>
<dbReference type="GO" id="GO:0071004">
    <property type="term" value="C:U2-type prespliceosome"/>
    <property type="evidence" value="ECO:0000266"/>
    <property type="project" value="PomBase"/>
</dbReference>
<dbReference type="GO" id="GO:0003723">
    <property type="term" value="F:RNA binding"/>
    <property type="evidence" value="ECO:0000318"/>
    <property type="project" value="GO_Central"/>
</dbReference>
<dbReference type="GO" id="GO:0045292">
    <property type="term" value="P:mRNA cis splicing, via spliceosome"/>
    <property type="evidence" value="ECO:0000269"/>
    <property type="project" value="PomBase"/>
</dbReference>
<dbReference type="GO" id="GO:0000398">
    <property type="term" value="P:mRNA splicing, via spliceosome"/>
    <property type="evidence" value="ECO:0000318"/>
    <property type="project" value="GO_Central"/>
</dbReference>
<dbReference type="CDD" id="cd12334">
    <property type="entry name" value="RRM1_SF3B4"/>
    <property type="match status" value="1"/>
</dbReference>
<dbReference type="CDD" id="cd12335">
    <property type="entry name" value="RRM2_SF3B4"/>
    <property type="match status" value="1"/>
</dbReference>
<dbReference type="FunFam" id="3.30.70.330:FF:000895">
    <property type="entry name" value="Hsh49p"/>
    <property type="match status" value="1"/>
</dbReference>
<dbReference type="FunFam" id="3.30.70.330:FF:000505">
    <property type="entry name" value="Splicing factor 3B subunit 4"/>
    <property type="match status" value="1"/>
</dbReference>
<dbReference type="Gene3D" id="3.30.70.330">
    <property type="match status" value="2"/>
</dbReference>
<dbReference type="InterPro" id="IPR012677">
    <property type="entry name" value="Nucleotide-bd_a/b_plait_sf"/>
</dbReference>
<dbReference type="InterPro" id="IPR035979">
    <property type="entry name" value="RBD_domain_sf"/>
</dbReference>
<dbReference type="InterPro" id="IPR000504">
    <property type="entry name" value="RRM_dom"/>
</dbReference>
<dbReference type="InterPro" id="IPR034158">
    <property type="entry name" value="SF3B4_RRM1"/>
</dbReference>
<dbReference type="InterPro" id="IPR034159">
    <property type="entry name" value="SF3B4_RRM2"/>
</dbReference>
<dbReference type="InterPro" id="IPR052084">
    <property type="entry name" value="SF3B4_spliceosome_assoc"/>
</dbReference>
<dbReference type="PANTHER" id="PTHR48030">
    <property type="entry name" value="SPLICING FACTOR 3B SUBUNIT 4"/>
    <property type="match status" value="1"/>
</dbReference>
<dbReference type="PANTHER" id="PTHR48030:SF3">
    <property type="entry name" value="SPLICING FACTOR 3B SUBUNIT 4"/>
    <property type="match status" value="1"/>
</dbReference>
<dbReference type="Pfam" id="PF00076">
    <property type="entry name" value="RRM_1"/>
    <property type="match status" value="2"/>
</dbReference>
<dbReference type="SMART" id="SM00360">
    <property type="entry name" value="RRM"/>
    <property type="match status" value="2"/>
</dbReference>
<dbReference type="SUPFAM" id="SSF54928">
    <property type="entry name" value="RNA-binding domain, RBD"/>
    <property type="match status" value="1"/>
</dbReference>
<dbReference type="PROSITE" id="PS50102">
    <property type="entry name" value="RRM"/>
    <property type="match status" value="2"/>
</dbReference>
<comment type="subcellular location">
    <subcellularLocation>
        <location evidence="3">Nucleus</location>
    </subcellularLocation>
</comment>
<comment type="similarity">
    <text evidence="3">Belongs to the SF3B4 family.</text>
</comment>
<sequence>MSIREDRNQDATIYLGNLDEKVTDSILFELCLQAGPVVNIHIPRDRVRNSHNGFGFCEFLHEQDVEYACQILNQVKLFGKPIRVNRASQDRGVNTLIGANLFVGNLDPLVDERVLYDTFSALGQLVKAPQVARDENGRSKGYGFVSYDSFETADAAIEAMNNQFLMNKPITVSYAFKREGKGERHGDIAERKLAAAAKKNKVAVTPQSTLPPGFSPATPAPTSAANTPATIAATSIPPVPNVPLVGATTAVPPLSIPNVLPFTAAQHFPGMPAMPMMNVPMGPGGAPLVPPPPPGMVMASPSPAAATIPGAPVMPNIPFYQTINAQNGYSQQQRR</sequence>
<reference key="1">
    <citation type="journal article" date="2002" name="Nature">
        <title>The genome sequence of Schizosaccharomyces pombe.</title>
        <authorList>
            <person name="Wood V."/>
            <person name="Gwilliam R."/>
            <person name="Rajandream M.A."/>
            <person name="Lyne M.H."/>
            <person name="Lyne R."/>
            <person name="Stewart A."/>
            <person name="Sgouros J.G."/>
            <person name="Peat N."/>
            <person name="Hayles J."/>
            <person name="Baker S.G."/>
            <person name="Basham D."/>
            <person name="Bowman S."/>
            <person name="Brooks K."/>
            <person name="Brown D."/>
            <person name="Brown S."/>
            <person name="Chillingworth T."/>
            <person name="Churcher C.M."/>
            <person name="Collins M."/>
            <person name="Connor R."/>
            <person name="Cronin A."/>
            <person name="Davis P."/>
            <person name="Feltwell T."/>
            <person name="Fraser A."/>
            <person name="Gentles S."/>
            <person name="Goble A."/>
            <person name="Hamlin N."/>
            <person name="Harris D.E."/>
            <person name="Hidalgo J."/>
            <person name="Hodgson G."/>
            <person name="Holroyd S."/>
            <person name="Hornsby T."/>
            <person name="Howarth S."/>
            <person name="Huckle E.J."/>
            <person name="Hunt S."/>
            <person name="Jagels K."/>
            <person name="James K.D."/>
            <person name="Jones L."/>
            <person name="Jones M."/>
            <person name="Leather S."/>
            <person name="McDonald S."/>
            <person name="McLean J."/>
            <person name="Mooney P."/>
            <person name="Moule S."/>
            <person name="Mungall K.L."/>
            <person name="Murphy L.D."/>
            <person name="Niblett D."/>
            <person name="Odell C."/>
            <person name="Oliver K."/>
            <person name="O'Neil S."/>
            <person name="Pearson D."/>
            <person name="Quail M.A."/>
            <person name="Rabbinowitsch E."/>
            <person name="Rutherford K.M."/>
            <person name="Rutter S."/>
            <person name="Saunders D."/>
            <person name="Seeger K."/>
            <person name="Sharp S."/>
            <person name="Skelton J."/>
            <person name="Simmonds M.N."/>
            <person name="Squares R."/>
            <person name="Squares S."/>
            <person name="Stevens K."/>
            <person name="Taylor K."/>
            <person name="Taylor R.G."/>
            <person name="Tivey A."/>
            <person name="Walsh S.V."/>
            <person name="Warren T."/>
            <person name="Whitehead S."/>
            <person name="Woodward J.R."/>
            <person name="Volckaert G."/>
            <person name="Aert R."/>
            <person name="Robben J."/>
            <person name="Grymonprez B."/>
            <person name="Weltjens I."/>
            <person name="Vanstreels E."/>
            <person name="Rieger M."/>
            <person name="Schaefer M."/>
            <person name="Mueller-Auer S."/>
            <person name="Gabel C."/>
            <person name="Fuchs M."/>
            <person name="Duesterhoeft A."/>
            <person name="Fritzc C."/>
            <person name="Holzer E."/>
            <person name="Moestl D."/>
            <person name="Hilbert H."/>
            <person name="Borzym K."/>
            <person name="Langer I."/>
            <person name="Beck A."/>
            <person name="Lehrach H."/>
            <person name="Reinhardt R."/>
            <person name="Pohl T.M."/>
            <person name="Eger P."/>
            <person name="Zimmermann W."/>
            <person name="Wedler H."/>
            <person name="Wambutt R."/>
            <person name="Purnelle B."/>
            <person name="Goffeau A."/>
            <person name="Cadieu E."/>
            <person name="Dreano S."/>
            <person name="Gloux S."/>
            <person name="Lelaure V."/>
            <person name="Mottier S."/>
            <person name="Galibert F."/>
            <person name="Aves S.J."/>
            <person name="Xiang Z."/>
            <person name="Hunt C."/>
            <person name="Moore K."/>
            <person name="Hurst S.M."/>
            <person name="Lucas M."/>
            <person name="Rochet M."/>
            <person name="Gaillardin C."/>
            <person name="Tallada V.A."/>
            <person name="Garzon A."/>
            <person name="Thode G."/>
            <person name="Daga R.R."/>
            <person name="Cruzado L."/>
            <person name="Jimenez J."/>
            <person name="Sanchez M."/>
            <person name="del Rey F."/>
            <person name="Benito J."/>
            <person name="Dominguez A."/>
            <person name="Revuelta J.L."/>
            <person name="Moreno S."/>
            <person name="Armstrong J."/>
            <person name="Forsburg S.L."/>
            <person name="Cerutti L."/>
            <person name="Lowe T."/>
            <person name="McCombie W.R."/>
            <person name="Paulsen I."/>
            <person name="Potashkin J."/>
            <person name="Shpakovski G.V."/>
            <person name="Ussery D."/>
            <person name="Barrell B.G."/>
            <person name="Nurse P."/>
        </authorList>
    </citation>
    <scope>NUCLEOTIDE SEQUENCE [LARGE SCALE GENOMIC DNA]</scope>
    <source>
        <strain>972 / ATCC 24843</strain>
    </source>
</reference>
<evidence type="ECO:0000255" key="1">
    <source>
        <dbReference type="PROSITE-ProRule" id="PRU00176"/>
    </source>
</evidence>
<evidence type="ECO:0000256" key="2">
    <source>
        <dbReference type="SAM" id="MobiDB-lite"/>
    </source>
</evidence>
<evidence type="ECO:0000305" key="3"/>
<protein>
    <recommendedName>
        <fullName>Spliceosome-associated protein 49</fullName>
    </recommendedName>
</protein>
<gene>
    <name type="primary">sap49</name>
    <name type="ORF">SPAC31G5.01</name>
    <name type="ORF">SPAPB1A11.05</name>
</gene>
<keyword id="KW-0539">Nucleus</keyword>
<keyword id="KW-1185">Reference proteome</keyword>
<keyword id="KW-0677">Repeat</keyword>
<keyword id="KW-0694">RNA-binding</keyword>
<name>SAP49_SCHPO</name>
<proteinExistence type="inferred from homology"/>
<accession>O14102</accession>
<accession>Q9HDX0</accession>
<organism>
    <name type="scientific">Schizosaccharomyces pombe (strain 972 / ATCC 24843)</name>
    <name type="common">Fission yeast</name>
    <dbReference type="NCBI Taxonomy" id="284812"/>
    <lineage>
        <taxon>Eukaryota</taxon>
        <taxon>Fungi</taxon>
        <taxon>Dikarya</taxon>
        <taxon>Ascomycota</taxon>
        <taxon>Taphrinomycotina</taxon>
        <taxon>Schizosaccharomycetes</taxon>
        <taxon>Schizosaccharomycetales</taxon>
        <taxon>Schizosaccharomycetaceae</taxon>
        <taxon>Schizosaccharomyces</taxon>
    </lineage>
</organism>